<gene>
    <name evidence="2" type="primary">bphD</name>
</gene>
<sequence length="286" mass="31345">MTELSESTTSKFVTINEKGLSNFRIHLNDAGQGEAVIMLHGGGPGAGGWSNYYRNIGPFVAAGYRVILPDAPGFNKSDAVVMDEQRGLVNARAVKGMMDALGIDKAHLVGNSMGGAGALNFALEYPERTGKVILMGPGGLGASLFNPMPMEGIKLLFKLYAEPSLETLKQMLNVFMFDQSLITDELLQGRWANIQRNPEHLKNFILSAQKVPLSAWDVSPRLGEIKAKTLVTWGRDDRFVPLDHGLKLVANMPDAQLHVFPRCGHWAQWEHADAFNRLTLDFLANG</sequence>
<evidence type="ECO:0000255" key="1"/>
<evidence type="ECO:0000255" key="2">
    <source>
        <dbReference type="HAMAP-Rule" id="MF_01688"/>
    </source>
</evidence>
<name>BPHD_BURCE</name>
<accession>Q2VLB9</accession>
<proteinExistence type="inferred from homology"/>
<protein>
    <recommendedName>
        <fullName evidence="2">2-hydroxy-6-oxo-6-phenylhexa-2,4-dienoate hydrolase</fullName>
        <shortName evidence="2">HOPDA hydrolase</shortName>
        <ecNumber evidence="2">3.7.1.8</ecNumber>
    </recommendedName>
    <alternativeName>
        <fullName evidence="2">2,6-dioxo-6-phenylhexa-3-enoate hydrolase</fullName>
    </alternativeName>
</protein>
<geneLocation type="plasmid">
    <name>pIJB1</name>
</geneLocation>
<organism>
    <name type="scientific">Burkholderia cepacia</name>
    <name type="common">Pseudomonas cepacia</name>
    <dbReference type="NCBI Taxonomy" id="292"/>
    <lineage>
        <taxon>Bacteria</taxon>
        <taxon>Pseudomonadati</taxon>
        <taxon>Pseudomonadota</taxon>
        <taxon>Betaproteobacteria</taxon>
        <taxon>Burkholderiales</taxon>
        <taxon>Burkholderiaceae</taxon>
        <taxon>Burkholderia</taxon>
        <taxon>Burkholderia cepacia complex</taxon>
    </lineage>
</organism>
<comment type="function">
    <text evidence="2">Catalyzes an unusual C-C bond hydrolysis of 2-hydroxy-6-oxo-6-phenylhexa-2,4-dienoic acid (HOPDA) to produce benzoic acid and 2-hydroxy-2,4-pentadienoic acid (HPD).</text>
</comment>
<comment type="catalytic activity">
    <reaction evidence="2">
        <text>2,6-dioxo-6-phenylhexa-3-enoate + H2O = 2-oxopent-4-enoate + benzoate + H(+)</text>
        <dbReference type="Rhea" id="RHEA:17161"/>
        <dbReference type="ChEBI" id="CHEBI:11641"/>
        <dbReference type="ChEBI" id="CHEBI:15377"/>
        <dbReference type="ChEBI" id="CHEBI:15378"/>
        <dbReference type="ChEBI" id="CHEBI:16150"/>
        <dbReference type="ChEBI" id="CHEBI:64675"/>
        <dbReference type="EC" id="3.7.1.8"/>
    </reaction>
</comment>
<comment type="pathway">
    <text evidence="2">Xenobiotic degradation; biphenyl degradation; 2-hydroxy-2,4-pentadienoate and benzoate from biphenyl: step 4/4.</text>
</comment>
<comment type="subunit">
    <text evidence="2">Homodimer.</text>
</comment>
<comment type="similarity">
    <text evidence="2">Belongs to the AB hydrolase superfamily. BphD family.</text>
</comment>
<reference key="1">
    <citation type="submission" date="2005-04" db="EMBL/GenBank/DDBJ databases">
        <authorList>
            <person name="Sebastianelli A."/>
            <person name="Bruce I.J."/>
        </authorList>
    </citation>
    <scope>NUCLEOTIDE SEQUENCE [GENOMIC DNA]</scope>
    <source>
        <strain>2a</strain>
    </source>
</reference>
<feature type="chain" id="PRO_0000337774" description="2-hydroxy-6-oxo-6-phenylhexa-2,4-dienoate hydrolase">
    <location>
        <begin position="1"/>
        <end position="286"/>
    </location>
</feature>
<feature type="domain" description="AB hydrolase-1" evidence="1">
    <location>
        <begin position="36"/>
        <end position="271"/>
    </location>
</feature>
<feature type="active site" description="Proton acceptor" evidence="2">
    <location>
        <position position="265"/>
    </location>
</feature>
<feature type="binding site" evidence="2">
    <location>
        <begin position="42"/>
        <end position="43"/>
    </location>
    <ligand>
        <name>substrate</name>
    </ligand>
</feature>
<feature type="binding site" evidence="2">
    <location>
        <position position="51"/>
    </location>
    <ligand>
        <name>substrate</name>
    </ligand>
</feature>
<feature type="binding site" evidence="2">
    <location>
        <position position="111"/>
    </location>
    <ligand>
        <name>substrate</name>
    </ligand>
</feature>
<feature type="binding site" evidence="2">
    <location>
        <position position="180"/>
    </location>
    <ligand>
        <name>substrate</name>
    </ligand>
</feature>
<feature type="binding site" evidence="2">
    <location>
        <position position="190"/>
    </location>
    <ligand>
        <name>substrate</name>
    </ligand>
</feature>
<feature type="binding site" evidence="2">
    <location>
        <position position="266"/>
    </location>
    <ligand>
        <name>substrate</name>
    </ligand>
</feature>
<feature type="site" description="Transition state stabilizer" evidence="2">
    <location>
        <position position="112"/>
    </location>
</feature>
<keyword id="KW-0058">Aromatic hydrocarbons catabolism</keyword>
<keyword id="KW-0378">Hydrolase</keyword>
<keyword id="KW-0614">Plasmid</keyword>
<dbReference type="EC" id="3.7.1.8" evidence="2"/>
<dbReference type="EMBL" id="DQ065837">
    <property type="protein sequence ID" value="AAZ08181.1"/>
    <property type="molecule type" value="Genomic_DNA"/>
</dbReference>
<dbReference type="SMR" id="Q2VLB9"/>
<dbReference type="ESTHER" id="burce-bphd">
    <property type="family name" value="Carbon-carbon_bond_hydrolase"/>
</dbReference>
<dbReference type="SABIO-RK" id="Q2VLB9"/>
<dbReference type="UniPathway" id="UPA00155">
    <property type="reaction ID" value="UER00253"/>
</dbReference>
<dbReference type="GO" id="GO:0016020">
    <property type="term" value="C:membrane"/>
    <property type="evidence" value="ECO:0007669"/>
    <property type="project" value="TreeGrafter"/>
</dbReference>
<dbReference type="GO" id="GO:0018774">
    <property type="term" value="F:2,6-dioxo-6-phenylhexa-3-enoate hydrolase activity"/>
    <property type="evidence" value="ECO:0007669"/>
    <property type="project" value="RHEA"/>
</dbReference>
<dbReference type="GO" id="GO:0018771">
    <property type="term" value="F:2-hydroxy-6-oxonona-2,4-dienedioate hydrolase activity"/>
    <property type="evidence" value="ECO:0007669"/>
    <property type="project" value="UniProtKB-UniRule"/>
</dbReference>
<dbReference type="GO" id="GO:0047372">
    <property type="term" value="F:monoacylglycerol lipase activity"/>
    <property type="evidence" value="ECO:0007669"/>
    <property type="project" value="TreeGrafter"/>
</dbReference>
<dbReference type="GO" id="GO:0046464">
    <property type="term" value="P:acylglycerol catabolic process"/>
    <property type="evidence" value="ECO:0007669"/>
    <property type="project" value="TreeGrafter"/>
</dbReference>
<dbReference type="GO" id="GO:0070980">
    <property type="term" value="P:biphenyl catabolic process"/>
    <property type="evidence" value="ECO:0007669"/>
    <property type="project" value="UniProtKB-UniRule"/>
</dbReference>
<dbReference type="Gene3D" id="3.40.50.1820">
    <property type="entry name" value="alpha/beta hydrolase"/>
    <property type="match status" value="1"/>
</dbReference>
<dbReference type="HAMAP" id="MF_01688">
    <property type="entry name" value="Biphenyl_BphD"/>
    <property type="match status" value="1"/>
</dbReference>
<dbReference type="InterPro" id="IPR000073">
    <property type="entry name" value="AB_hydrolase_1"/>
</dbReference>
<dbReference type="InterPro" id="IPR029058">
    <property type="entry name" value="AB_hydrolase_fold"/>
</dbReference>
<dbReference type="InterPro" id="IPR050266">
    <property type="entry name" value="AB_hydrolase_sf"/>
</dbReference>
<dbReference type="InterPro" id="IPR017727">
    <property type="entry name" value="HOPD_hydrolase_BphD"/>
</dbReference>
<dbReference type="NCBIfam" id="TIGR03343">
    <property type="entry name" value="biphenyl_bphD"/>
    <property type="match status" value="1"/>
</dbReference>
<dbReference type="PANTHER" id="PTHR43798">
    <property type="entry name" value="MONOACYLGLYCEROL LIPASE"/>
    <property type="match status" value="1"/>
</dbReference>
<dbReference type="PANTHER" id="PTHR43798:SF5">
    <property type="entry name" value="MONOACYLGLYCEROL LIPASE ABHD6"/>
    <property type="match status" value="1"/>
</dbReference>
<dbReference type="Pfam" id="PF00561">
    <property type="entry name" value="Abhydrolase_1"/>
    <property type="match status" value="1"/>
</dbReference>
<dbReference type="PRINTS" id="PR00111">
    <property type="entry name" value="ABHYDROLASE"/>
</dbReference>
<dbReference type="SUPFAM" id="SSF53474">
    <property type="entry name" value="alpha/beta-Hydrolases"/>
    <property type="match status" value="1"/>
</dbReference>